<sequence length="176" mass="18890">MTTIVSVRRENEVAMGGDGQVSLGNTVMKGNARKVRRLYNGQVIAGFAGGTADAFTLFERFEAQLEKHQGNLTRAAVELAKDWRTDRALRKLEALLAVADKTASLIITGNGDVIEPEQGLIAIGSGGPFAQAAARALLENTELSAHEIAEKALEIAGDICIYTNQNRTLEVLPIKD</sequence>
<evidence type="ECO:0000255" key="1">
    <source>
        <dbReference type="HAMAP-Rule" id="MF_00248"/>
    </source>
</evidence>
<protein>
    <recommendedName>
        <fullName evidence="1">ATP-dependent protease subunit HslV</fullName>
        <ecNumber evidence="1">3.4.25.2</ecNumber>
    </recommendedName>
</protein>
<comment type="function">
    <text evidence="1">Protease subunit of a proteasome-like degradation complex believed to be a general protein degrading machinery.</text>
</comment>
<comment type="catalytic activity">
    <reaction evidence="1">
        <text>ATP-dependent cleavage of peptide bonds with broad specificity.</text>
        <dbReference type="EC" id="3.4.25.2"/>
    </reaction>
</comment>
<comment type="activity regulation">
    <text evidence="1">Allosterically activated by HslU binding.</text>
</comment>
<comment type="subunit">
    <text evidence="1">A double ring-shaped homohexamer of HslV is capped on each side by a ring-shaped HslU homohexamer. The assembly of the HslU/HslV complex is dependent on binding of ATP.</text>
</comment>
<comment type="subcellular location">
    <subcellularLocation>
        <location evidence="1">Cytoplasm</location>
    </subcellularLocation>
</comment>
<comment type="similarity">
    <text evidence="1">Belongs to the peptidase T1B family. HslV subfamily.</text>
</comment>
<dbReference type="EC" id="3.4.25.2" evidence="1"/>
<dbReference type="EMBL" id="CP000514">
    <property type="protein sequence ID" value="ABM17915.1"/>
    <property type="molecule type" value="Genomic_DNA"/>
</dbReference>
<dbReference type="RefSeq" id="WP_011784337.1">
    <property type="nucleotide sequence ID" value="NC_008740.1"/>
</dbReference>
<dbReference type="SMR" id="A1TYU6"/>
<dbReference type="STRING" id="351348.Maqu_0818"/>
<dbReference type="MEROPS" id="T01.006"/>
<dbReference type="GeneID" id="31820195"/>
<dbReference type="KEGG" id="maq:Maqu_0818"/>
<dbReference type="eggNOG" id="COG5405">
    <property type="taxonomic scope" value="Bacteria"/>
</dbReference>
<dbReference type="HOGENOM" id="CLU_093872_1_0_6"/>
<dbReference type="OrthoDB" id="9804884at2"/>
<dbReference type="Proteomes" id="UP000000998">
    <property type="component" value="Chromosome"/>
</dbReference>
<dbReference type="GO" id="GO:0009376">
    <property type="term" value="C:HslUV protease complex"/>
    <property type="evidence" value="ECO:0007669"/>
    <property type="project" value="UniProtKB-UniRule"/>
</dbReference>
<dbReference type="GO" id="GO:0005839">
    <property type="term" value="C:proteasome core complex"/>
    <property type="evidence" value="ECO:0007669"/>
    <property type="project" value="InterPro"/>
</dbReference>
<dbReference type="GO" id="GO:0046872">
    <property type="term" value="F:metal ion binding"/>
    <property type="evidence" value="ECO:0007669"/>
    <property type="project" value="UniProtKB-KW"/>
</dbReference>
<dbReference type="GO" id="GO:0004298">
    <property type="term" value="F:threonine-type endopeptidase activity"/>
    <property type="evidence" value="ECO:0007669"/>
    <property type="project" value="UniProtKB-KW"/>
</dbReference>
<dbReference type="GO" id="GO:0051603">
    <property type="term" value="P:proteolysis involved in protein catabolic process"/>
    <property type="evidence" value="ECO:0007669"/>
    <property type="project" value="InterPro"/>
</dbReference>
<dbReference type="CDD" id="cd01913">
    <property type="entry name" value="protease_HslV"/>
    <property type="match status" value="1"/>
</dbReference>
<dbReference type="FunFam" id="3.60.20.10:FF:000002">
    <property type="entry name" value="ATP-dependent protease subunit HslV"/>
    <property type="match status" value="1"/>
</dbReference>
<dbReference type="Gene3D" id="3.60.20.10">
    <property type="entry name" value="Glutamine Phosphoribosylpyrophosphate, subunit 1, domain 1"/>
    <property type="match status" value="1"/>
</dbReference>
<dbReference type="HAMAP" id="MF_00248">
    <property type="entry name" value="HslV"/>
    <property type="match status" value="1"/>
</dbReference>
<dbReference type="InterPro" id="IPR022281">
    <property type="entry name" value="ATP-dep_Prtase_HsIV_su"/>
</dbReference>
<dbReference type="InterPro" id="IPR029055">
    <property type="entry name" value="Ntn_hydrolases_N"/>
</dbReference>
<dbReference type="InterPro" id="IPR001353">
    <property type="entry name" value="Proteasome_sua/b"/>
</dbReference>
<dbReference type="InterPro" id="IPR023333">
    <property type="entry name" value="Proteasome_suB-type"/>
</dbReference>
<dbReference type="NCBIfam" id="TIGR03692">
    <property type="entry name" value="ATP_dep_HslV"/>
    <property type="match status" value="1"/>
</dbReference>
<dbReference type="NCBIfam" id="NF003964">
    <property type="entry name" value="PRK05456.1"/>
    <property type="match status" value="1"/>
</dbReference>
<dbReference type="PANTHER" id="PTHR32194:SF0">
    <property type="entry name" value="ATP-DEPENDENT PROTEASE SUBUNIT HSLV"/>
    <property type="match status" value="1"/>
</dbReference>
<dbReference type="PANTHER" id="PTHR32194">
    <property type="entry name" value="METALLOPROTEASE TLDD"/>
    <property type="match status" value="1"/>
</dbReference>
<dbReference type="Pfam" id="PF00227">
    <property type="entry name" value="Proteasome"/>
    <property type="match status" value="1"/>
</dbReference>
<dbReference type="PIRSF" id="PIRSF039093">
    <property type="entry name" value="HslV"/>
    <property type="match status" value="1"/>
</dbReference>
<dbReference type="SUPFAM" id="SSF56235">
    <property type="entry name" value="N-terminal nucleophile aminohydrolases (Ntn hydrolases)"/>
    <property type="match status" value="1"/>
</dbReference>
<dbReference type="PROSITE" id="PS51476">
    <property type="entry name" value="PROTEASOME_BETA_2"/>
    <property type="match status" value="1"/>
</dbReference>
<gene>
    <name evidence="1" type="primary">hslV</name>
    <name type="ordered locus">Maqu_0818</name>
</gene>
<proteinExistence type="inferred from homology"/>
<feature type="chain" id="PRO_1000012634" description="ATP-dependent protease subunit HslV">
    <location>
        <begin position="1"/>
        <end position="176"/>
    </location>
</feature>
<feature type="active site" evidence="1">
    <location>
        <position position="2"/>
    </location>
</feature>
<feature type="binding site" evidence="1">
    <location>
        <position position="157"/>
    </location>
    <ligand>
        <name>Na(+)</name>
        <dbReference type="ChEBI" id="CHEBI:29101"/>
    </ligand>
</feature>
<feature type="binding site" evidence="1">
    <location>
        <position position="160"/>
    </location>
    <ligand>
        <name>Na(+)</name>
        <dbReference type="ChEBI" id="CHEBI:29101"/>
    </ligand>
</feature>
<feature type="binding site" evidence="1">
    <location>
        <position position="163"/>
    </location>
    <ligand>
        <name>Na(+)</name>
        <dbReference type="ChEBI" id="CHEBI:29101"/>
    </ligand>
</feature>
<keyword id="KW-0021">Allosteric enzyme</keyword>
<keyword id="KW-0963">Cytoplasm</keyword>
<keyword id="KW-0378">Hydrolase</keyword>
<keyword id="KW-0479">Metal-binding</keyword>
<keyword id="KW-0645">Protease</keyword>
<keyword id="KW-0915">Sodium</keyword>
<keyword id="KW-0888">Threonine protease</keyword>
<organism>
    <name type="scientific">Marinobacter nauticus (strain ATCC 700491 / DSM 11845 / VT8)</name>
    <name type="common">Marinobacter aquaeolei</name>
    <dbReference type="NCBI Taxonomy" id="351348"/>
    <lineage>
        <taxon>Bacteria</taxon>
        <taxon>Pseudomonadati</taxon>
        <taxon>Pseudomonadota</taxon>
        <taxon>Gammaproteobacteria</taxon>
        <taxon>Pseudomonadales</taxon>
        <taxon>Marinobacteraceae</taxon>
        <taxon>Marinobacter</taxon>
    </lineage>
</organism>
<name>HSLV_MARN8</name>
<reference key="1">
    <citation type="journal article" date="2011" name="Appl. Environ. Microbiol.">
        <title>Genomic potential of Marinobacter aquaeolei, a biogeochemical 'opportunitroph'.</title>
        <authorList>
            <person name="Singer E."/>
            <person name="Webb E.A."/>
            <person name="Nelson W.C."/>
            <person name="Heidelberg J.F."/>
            <person name="Ivanova N."/>
            <person name="Pati A."/>
            <person name="Edwards K.J."/>
        </authorList>
    </citation>
    <scope>NUCLEOTIDE SEQUENCE [LARGE SCALE GENOMIC DNA]</scope>
    <source>
        <strain>ATCC 700491 / DSM 11845 / VT8</strain>
    </source>
</reference>
<accession>A1TYU6</accession>